<feature type="chain" id="PRO_1000188669" description="UPF0637 protein BCA_4065">
    <location>
        <begin position="1"/>
        <end position="208"/>
    </location>
</feature>
<accession>C1EPX4</accession>
<protein>
    <recommendedName>
        <fullName evidence="1">UPF0637 protein BCA_4065</fullName>
    </recommendedName>
</protein>
<comment type="similarity">
    <text evidence="1">Belongs to the UPF0637 family.</text>
</comment>
<dbReference type="EMBL" id="CP001407">
    <property type="protein sequence ID" value="ACO26201.1"/>
    <property type="molecule type" value="Genomic_DNA"/>
</dbReference>
<dbReference type="RefSeq" id="WP_000175083.1">
    <property type="nucleotide sequence ID" value="NZ_CP009318.1"/>
</dbReference>
<dbReference type="SMR" id="C1EPX4"/>
<dbReference type="KEGG" id="bcx:BCA_4065"/>
<dbReference type="PATRIC" id="fig|572264.18.peg.4017"/>
<dbReference type="Proteomes" id="UP000002210">
    <property type="component" value="Chromosome"/>
</dbReference>
<dbReference type="Gene3D" id="3.30.930.20">
    <property type="entry name" value="Protein of unknown function DUF1054"/>
    <property type="match status" value="1"/>
</dbReference>
<dbReference type="HAMAP" id="MF_01851">
    <property type="entry name" value="UPF0637"/>
    <property type="match status" value="1"/>
</dbReference>
<dbReference type="InterPro" id="IPR009403">
    <property type="entry name" value="UPF0637"/>
</dbReference>
<dbReference type="InterPro" id="IPR053707">
    <property type="entry name" value="UPF0637_domain_sf"/>
</dbReference>
<dbReference type="Pfam" id="PF06335">
    <property type="entry name" value="DUF1054"/>
    <property type="match status" value="1"/>
</dbReference>
<dbReference type="PIRSF" id="PIRSF021332">
    <property type="entry name" value="DUF1054"/>
    <property type="match status" value="1"/>
</dbReference>
<dbReference type="SUPFAM" id="SSF142913">
    <property type="entry name" value="YktB/PF0168-like"/>
    <property type="match status" value="1"/>
</dbReference>
<organism>
    <name type="scientific">Bacillus cereus (strain 03BB102)</name>
    <dbReference type="NCBI Taxonomy" id="572264"/>
    <lineage>
        <taxon>Bacteria</taxon>
        <taxon>Bacillati</taxon>
        <taxon>Bacillota</taxon>
        <taxon>Bacilli</taxon>
        <taxon>Bacillales</taxon>
        <taxon>Bacillaceae</taxon>
        <taxon>Bacillus</taxon>
        <taxon>Bacillus cereus group</taxon>
    </lineage>
</organism>
<reference key="1">
    <citation type="submission" date="2009-02" db="EMBL/GenBank/DDBJ databases">
        <title>Genome sequence of Bacillus cereus 03BB102.</title>
        <authorList>
            <person name="Dodson R.J."/>
            <person name="Jackson P."/>
            <person name="Munk A.C."/>
            <person name="Brettin T."/>
            <person name="Bruce D."/>
            <person name="Detter C."/>
            <person name="Tapia R."/>
            <person name="Han C."/>
            <person name="Sutton G."/>
            <person name="Sims D."/>
        </authorList>
    </citation>
    <scope>NUCLEOTIDE SEQUENCE [LARGE SCALE GENOMIC DNA]</scope>
    <source>
        <strain>03BB102</strain>
    </source>
</reference>
<proteinExistence type="inferred from homology"/>
<gene>
    <name type="ordered locus">BCA_4065</name>
</gene>
<name>Y4065_BACC3</name>
<evidence type="ECO:0000255" key="1">
    <source>
        <dbReference type="HAMAP-Rule" id="MF_01851"/>
    </source>
</evidence>
<sequence length="208" mass="24034">MTLQTFKSTDFEVFTVDGLEERMSAIKTNIHPKLEALGEQFAAYLSKQTDENFFYHVAKHARRKVNPPNDTWVAFSTNKRGYKMLPHFQIGLWGTHAFIYFGLIYECPQKVETAHAFLEHLNDLKTNIPNDFVWSIDHTKPSVKLHKTLETEDLQKMIERLATVKKAELLVGIHISPEEFSAMTNEQFLAKIESTMQSLLPLYALCNR</sequence>